<accession>A3PGX7</accession>
<proteinExistence type="inferred from homology"/>
<feature type="chain" id="PRO_0000311205" description="Cytochrome c oxidase assembly protein CtaG">
    <location>
        <begin position="1"/>
        <end position="191"/>
    </location>
</feature>
<feature type="topological domain" description="Cytoplasmic" evidence="1">
    <location>
        <begin position="1"/>
        <end position="9"/>
    </location>
</feature>
<feature type="transmembrane region" description="Helical; Signal-anchor for type II membrane protein" evidence="1">
    <location>
        <begin position="10"/>
        <end position="30"/>
    </location>
</feature>
<feature type="topological domain" description="Periplasmic" evidence="1">
    <location>
        <begin position="31"/>
        <end position="191"/>
    </location>
</feature>
<comment type="function">
    <text evidence="1">Exerts its effect at some terminal stage of cytochrome c oxidase synthesis, probably by being involved in the insertion of the copper B into subunit I.</text>
</comment>
<comment type="subcellular location">
    <subcellularLocation>
        <location evidence="1">Cell inner membrane</location>
        <topology evidence="1">Single-pass type II membrane protein</topology>
        <orientation evidence="1">Periplasmic side</orientation>
    </subcellularLocation>
</comment>
<comment type="similarity">
    <text evidence="1">Belongs to the COX11/CtaG family.</text>
</comment>
<keyword id="KW-0997">Cell inner membrane</keyword>
<keyword id="KW-1003">Cell membrane</keyword>
<keyword id="KW-0186">Copper</keyword>
<keyword id="KW-0472">Membrane</keyword>
<keyword id="KW-0735">Signal-anchor</keyword>
<keyword id="KW-0812">Transmembrane</keyword>
<keyword id="KW-1133">Transmembrane helix</keyword>
<protein>
    <recommendedName>
        <fullName evidence="1">Cytochrome c oxidase assembly protein CtaG</fullName>
    </recommendedName>
</protein>
<evidence type="ECO:0000255" key="1">
    <source>
        <dbReference type="HAMAP-Rule" id="MF_00155"/>
    </source>
</evidence>
<gene>
    <name evidence="1" type="primary">ctaG</name>
    <name type="ordered locus">Rsph17029_0477</name>
</gene>
<dbReference type="EMBL" id="CP000577">
    <property type="protein sequence ID" value="ABN75593.1"/>
    <property type="molecule type" value="Genomic_DNA"/>
</dbReference>
<dbReference type="RefSeq" id="WP_002722699.1">
    <property type="nucleotide sequence ID" value="NC_009049.1"/>
</dbReference>
<dbReference type="SMR" id="A3PGX7"/>
<dbReference type="KEGG" id="rsh:Rsph17029_0477"/>
<dbReference type="HOGENOM" id="CLU_045000_5_0_5"/>
<dbReference type="GO" id="GO:0005886">
    <property type="term" value="C:plasma membrane"/>
    <property type="evidence" value="ECO:0007669"/>
    <property type="project" value="UniProtKB-SubCell"/>
</dbReference>
<dbReference type="GO" id="GO:0005507">
    <property type="term" value="F:copper ion binding"/>
    <property type="evidence" value="ECO:0007669"/>
    <property type="project" value="InterPro"/>
</dbReference>
<dbReference type="GO" id="GO:0008535">
    <property type="term" value="P:respiratory chain complex IV assembly"/>
    <property type="evidence" value="ECO:0007669"/>
    <property type="project" value="UniProtKB-UniRule"/>
</dbReference>
<dbReference type="FunFam" id="2.60.370.10:FF:000001">
    <property type="entry name" value="COX11 cytochrome c oxidase assembly homolog"/>
    <property type="match status" value="1"/>
</dbReference>
<dbReference type="Gene3D" id="2.60.370.10">
    <property type="entry name" value="Ctag/Cox11"/>
    <property type="match status" value="1"/>
</dbReference>
<dbReference type="HAMAP" id="MF_00155">
    <property type="entry name" value="CtaG"/>
    <property type="match status" value="1"/>
</dbReference>
<dbReference type="InterPro" id="IPR023471">
    <property type="entry name" value="CtaG/Cox11_dom_sf"/>
</dbReference>
<dbReference type="InterPro" id="IPR007533">
    <property type="entry name" value="Cyt_c_oxidase_assmbl_CtaG"/>
</dbReference>
<dbReference type="NCBIfam" id="NF003465">
    <property type="entry name" value="PRK05089.1"/>
    <property type="match status" value="1"/>
</dbReference>
<dbReference type="PANTHER" id="PTHR21320:SF3">
    <property type="entry name" value="CYTOCHROME C OXIDASE ASSEMBLY PROTEIN COX11, MITOCHONDRIAL-RELATED"/>
    <property type="match status" value="1"/>
</dbReference>
<dbReference type="PANTHER" id="PTHR21320">
    <property type="entry name" value="CYTOCHROME C OXIDASE ASSEMBLY PROTEIN COX11-RELATED"/>
    <property type="match status" value="1"/>
</dbReference>
<dbReference type="Pfam" id="PF04442">
    <property type="entry name" value="CtaG_Cox11"/>
    <property type="match status" value="1"/>
</dbReference>
<dbReference type="PIRSF" id="PIRSF005413">
    <property type="entry name" value="COX11"/>
    <property type="match status" value="1"/>
</dbReference>
<dbReference type="SUPFAM" id="SSF110111">
    <property type="entry name" value="Ctag/Cox11"/>
    <property type="match status" value="1"/>
</dbReference>
<organism>
    <name type="scientific">Cereibacter sphaeroides (strain ATCC 17029 / ATH 2.4.9)</name>
    <name type="common">Rhodobacter sphaeroides</name>
    <dbReference type="NCBI Taxonomy" id="349101"/>
    <lineage>
        <taxon>Bacteria</taxon>
        <taxon>Pseudomonadati</taxon>
        <taxon>Pseudomonadota</taxon>
        <taxon>Alphaproteobacteria</taxon>
        <taxon>Rhodobacterales</taxon>
        <taxon>Paracoccaceae</taxon>
        <taxon>Cereibacter</taxon>
    </lineage>
</organism>
<sequence length="191" mass="20741">MSLSPHQKTAGGLVLVVAVMGAASFAAVPFYNWFCRVTGFAGTTAVATEAPAEVLDRTVKVRFDASREAGMPWEFRPLQREMELKIGETGLAFYEAYNPTDRTVAGTASYNVTPDAAGGYFAKIACFCFTEQVLAPGERVEMPVTFYVDPAIIDDPDGRYVRQITLSYTFHETALTEEQAALAAESATDVN</sequence>
<name>COXZ_CERS1</name>
<reference key="1">
    <citation type="submission" date="2007-02" db="EMBL/GenBank/DDBJ databases">
        <title>Complete sequence of chromosome 1 of Rhodobacter sphaeroides ATCC 17029.</title>
        <authorList>
            <person name="Copeland A."/>
            <person name="Lucas S."/>
            <person name="Lapidus A."/>
            <person name="Barry K."/>
            <person name="Detter J.C."/>
            <person name="Glavina del Rio T."/>
            <person name="Hammon N."/>
            <person name="Israni S."/>
            <person name="Dalin E."/>
            <person name="Tice H."/>
            <person name="Pitluck S."/>
            <person name="Kiss H."/>
            <person name="Brettin T."/>
            <person name="Bruce D."/>
            <person name="Han C."/>
            <person name="Tapia R."/>
            <person name="Gilna P."/>
            <person name="Schmutz J."/>
            <person name="Larimer F."/>
            <person name="Land M."/>
            <person name="Hauser L."/>
            <person name="Kyrpides N."/>
            <person name="Mikhailova N."/>
            <person name="Richardson P."/>
            <person name="Mackenzie C."/>
            <person name="Choudhary M."/>
            <person name="Donohue T.J."/>
            <person name="Kaplan S."/>
        </authorList>
    </citation>
    <scope>NUCLEOTIDE SEQUENCE [LARGE SCALE GENOMIC DNA]</scope>
    <source>
        <strain>ATCC 17029 / ATH 2.4.9</strain>
    </source>
</reference>